<sequence length="97" mass="10886">EVASDDVAAEEAAAAPKIGRRVRVTAPLRVYHVLKAPDLDIQGMEGVVKQYVCVWKGKRVTANFPFKVEFELAVEGQPKPVRFFAHLREDEFEFVDG</sequence>
<name>FTRV_MAIZE</name>
<dbReference type="PIR" id="JT0703">
    <property type="entry name" value="JT0703"/>
</dbReference>
<dbReference type="SMR" id="P80680"/>
<dbReference type="FunCoup" id="P80680">
    <property type="interactions" value="813"/>
</dbReference>
<dbReference type="STRING" id="4577.P80680"/>
<dbReference type="PaxDb" id="4577-GRMZM2G139803_P01"/>
<dbReference type="MaizeGDB" id="134030"/>
<dbReference type="eggNOG" id="KOG2672">
    <property type="taxonomic scope" value="Eukaryota"/>
</dbReference>
<dbReference type="InParanoid" id="P80680"/>
<dbReference type="Proteomes" id="UP000007305">
    <property type="component" value="Unplaced"/>
</dbReference>
<dbReference type="ExpressionAtlas" id="P80680">
    <property type="expression patterns" value="baseline and differential"/>
</dbReference>
<dbReference type="GO" id="GO:0009507">
    <property type="term" value="C:chloroplast"/>
    <property type="evidence" value="ECO:0007669"/>
    <property type="project" value="UniProtKB-SubCell"/>
</dbReference>
<dbReference type="GO" id="GO:0016491">
    <property type="term" value="F:oxidoreductase activity"/>
    <property type="evidence" value="ECO:0007669"/>
    <property type="project" value="UniProtKB-KW"/>
</dbReference>
<dbReference type="GO" id="GO:0015979">
    <property type="term" value="P:photosynthesis"/>
    <property type="evidence" value="ECO:0007669"/>
    <property type="project" value="InterPro"/>
</dbReference>
<dbReference type="FunFam" id="2.30.30.50:FF:000002">
    <property type="entry name" value="Ferredoxin-thioredoxin reductase, variable chain"/>
    <property type="match status" value="1"/>
</dbReference>
<dbReference type="Gene3D" id="2.30.30.50">
    <property type="match status" value="1"/>
</dbReference>
<dbReference type="InterPro" id="IPR008990">
    <property type="entry name" value="Elect_transpt_acc-like_dom_sf"/>
</dbReference>
<dbReference type="InterPro" id="IPR004207">
    <property type="entry name" value="Fd_thioredoxin_Rdtase_alpha"/>
</dbReference>
<dbReference type="InterPro" id="IPR044166">
    <property type="entry name" value="FTRV"/>
</dbReference>
<dbReference type="PANTHER" id="PTHR46937:SF4">
    <property type="entry name" value="FERREDOXIN-THIOREDOXIN REDUCTASE SUBUNIT A1, CHLOROPLASTIC"/>
    <property type="match status" value="1"/>
</dbReference>
<dbReference type="PANTHER" id="PTHR46937">
    <property type="entry name" value="FERREDOXIN-THIOREDOXIN REDUCTASE, VARIABLE CHAIN"/>
    <property type="match status" value="1"/>
</dbReference>
<dbReference type="Pfam" id="PF02941">
    <property type="entry name" value="FeThRed_A"/>
    <property type="match status" value="1"/>
</dbReference>
<dbReference type="SUPFAM" id="SSF50090">
    <property type="entry name" value="Electron transport accessory proteins"/>
    <property type="match status" value="1"/>
</dbReference>
<reference key="1">
    <citation type="journal article" date="1996" name="Eur. J. Biochem.">
        <title>Amino acid sequence of the maize ferredoxin:thioredoxin reductase variable subunit.</title>
        <authorList>
            <person name="Iwadate H."/>
            <person name="Tsugita A."/>
            <person name="Chow L.-P."/>
            <person name="Kizuki K."/>
            <person name="Stritt-Etter A.-L."/>
            <person name="Li J."/>
            <person name="Schuermann P."/>
        </authorList>
    </citation>
    <scope>PROTEIN SEQUENCE</scope>
    <scope>FUNCTION</scope>
    <scope>SUBUNIT</scope>
    <source>
        <tissue>Leaf</tissue>
    </source>
</reference>
<protein>
    <recommendedName>
        <fullName>Ferredoxin-thioredoxin reductase, variable chain</fullName>
        <shortName>FTR-V</shortName>
    </recommendedName>
    <alternativeName>
        <fullName>Ferredoxin-thioredoxin reductase subunit A</fullName>
        <shortName>FTR-A</shortName>
    </alternativeName>
</protein>
<evidence type="ECO:0000269" key="1">
    <source>
    </source>
</evidence>
<evidence type="ECO:0000305" key="2"/>
<keyword id="KW-0150">Chloroplast</keyword>
<keyword id="KW-0903">Direct protein sequencing</keyword>
<keyword id="KW-0560">Oxidoreductase</keyword>
<keyword id="KW-0934">Plastid</keyword>
<keyword id="KW-1185">Reference proteome</keyword>
<proteinExistence type="evidence at protein level"/>
<comment type="function">
    <text evidence="1">Variable subunit of the ferredoxin-thioredoxin reductase (FTR), which catalyzes the two-electron reduction of thioredoxins by the electrons provided by reduced ferredoxin.</text>
</comment>
<comment type="subunit">
    <text evidence="1">Heterodimer of subunit A (variable subunit) and subunit B (catalytic subunit). Heterodimeric FTR forms a complex with ferredoxin and thioredoxin.</text>
</comment>
<comment type="subcellular location">
    <subcellularLocation>
        <location>Plastid</location>
        <location>Chloroplast</location>
    </subcellularLocation>
</comment>
<comment type="similarity">
    <text evidence="2">Belongs to the ferredoxin thioredoxin reductase alpha subunit family.</text>
</comment>
<organism>
    <name type="scientific">Zea mays</name>
    <name type="common">Maize</name>
    <dbReference type="NCBI Taxonomy" id="4577"/>
    <lineage>
        <taxon>Eukaryota</taxon>
        <taxon>Viridiplantae</taxon>
        <taxon>Streptophyta</taxon>
        <taxon>Embryophyta</taxon>
        <taxon>Tracheophyta</taxon>
        <taxon>Spermatophyta</taxon>
        <taxon>Magnoliopsida</taxon>
        <taxon>Liliopsida</taxon>
        <taxon>Poales</taxon>
        <taxon>Poaceae</taxon>
        <taxon>PACMAD clade</taxon>
        <taxon>Panicoideae</taxon>
        <taxon>Andropogonodae</taxon>
        <taxon>Andropogoneae</taxon>
        <taxon>Tripsacinae</taxon>
        <taxon>Zea</taxon>
    </lineage>
</organism>
<accession>P80680</accession>
<feature type="chain" id="PRO_0000087364" description="Ferredoxin-thioredoxin reductase, variable chain">
    <location>
        <begin position="1"/>
        <end position="97"/>
    </location>
</feature>